<protein>
    <recommendedName>
        <fullName evidence="1">Large ribosomal subunit protein bL9</fullName>
    </recommendedName>
    <alternativeName>
        <fullName evidence="2">50S ribosomal protein L9</fullName>
    </alternativeName>
</protein>
<proteinExistence type="inferred from homology"/>
<sequence>MKLILTAEVDHLGEPGDTVEVKDGYGRNYLLPRGLAIVASRGAQRQADDIRRARELKTVKGLEHANEIKTALEALDTVELAVNASADTGKLFGSVTATDVVAAIKKAGGPNLDKRTVALPKAHIKSLGTHSVSVRLHPGVEASVSLNVVAES</sequence>
<accession>A1UP83</accession>
<reference key="1">
    <citation type="submission" date="2006-12" db="EMBL/GenBank/DDBJ databases">
        <title>Complete sequence of chromosome of Mycobacterium sp. KMS.</title>
        <authorList>
            <consortium name="US DOE Joint Genome Institute"/>
            <person name="Copeland A."/>
            <person name="Lucas S."/>
            <person name="Lapidus A."/>
            <person name="Barry K."/>
            <person name="Detter J.C."/>
            <person name="Glavina del Rio T."/>
            <person name="Hammon N."/>
            <person name="Israni S."/>
            <person name="Dalin E."/>
            <person name="Tice H."/>
            <person name="Pitluck S."/>
            <person name="Kiss H."/>
            <person name="Brettin T."/>
            <person name="Bruce D."/>
            <person name="Han C."/>
            <person name="Tapia R."/>
            <person name="Gilna P."/>
            <person name="Schmutz J."/>
            <person name="Larimer F."/>
            <person name="Land M."/>
            <person name="Hauser L."/>
            <person name="Kyrpides N."/>
            <person name="Mikhailova N."/>
            <person name="Miller C.D."/>
            <person name="Richardson P."/>
        </authorList>
    </citation>
    <scope>NUCLEOTIDE SEQUENCE [LARGE SCALE GENOMIC DNA]</scope>
    <source>
        <strain>KMS</strain>
    </source>
</reference>
<gene>
    <name evidence="1" type="primary">rplI</name>
    <name type="ordered locus">Mkms_5456</name>
</gene>
<evidence type="ECO:0000255" key="1">
    <source>
        <dbReference type="HAMAP-Rule" id="MF_00503"/>
    </source>
</evidence>
<evidence type="ECO:0000305" key="2"/>
<feature type="chain" id="PRO_1000014813" description="Large ribosomal subunit protein bL9">
    <location>
        <begin position="1"/>
        <end position="152"/>
    </location>
</feature>
<keyword id="KW-0687">Ribonucleoprotein</keyword>
<keyword id="KW-0689">Ribosomal protein</keyword>
<keyword id="KW-0694">RNA-binding</keyword>
<keyword id="KW-0699">rRNA-binding</keyword>
<dbReference type="EMBL" id="CP000518">
    <property type="protein sequence ID" value="ABL94641.1"/>
    <property type="molecule type" value="Genomic_DNA"/>
</dbReference>
<dbReference type="SMR" id="A1UP83"/>
<dbReference type="STRING" id="189918.Mkms_5456"/>
<dbReference type="KEGG" id="mkm:Mkms_5456"/>
<dbReference type="HOGENOM" id="CLU_078938_5_1_11"/>
<dbReference type="OrthoDB" id="9788336at2"/>
<dbReference type="GO" id="GO:1990904">
    <property type="term" value="C:ribonucleoprotein complex"/>
    <property type="evidence" value="ECO:0007669"/>
    <property type="project" value="UniProtKB-KW"/>
</dbReference>
<dbReference type="GO" id="GO:0005840">
    <property type="term" value="C:ribosome"/>
    <property type="evidence" value="ECO:0007669"/>
    <property type="project" value="UniProtKB-KW"/>
</dbReference>
<dbReference type="GO" id="GO:0019843">
    <property type="term" value="F:rRNA binding"/>
    <property type="evidence" value="ECO:0007669"/>
    <property type="project" value="UniProtKB-UniRule"/>
</dbReference>
<dbReference type="GO" id="GO:0003735">
    <property type="term" value="F:structural constituent of ribosome"/>
    <property type="evidence" value="ECO:0007669"/>
    <property type="project" value="InterPro"/>
</dbReference>
<dbReference type="GO" id="GO:0006412">
    <property type="term" value="P:translation"/>
    <property type="evidence" value="ECO:0007669"/>
    <property type="project" value="UniProtKB-UniRule"/>
</dbReference>
<dbReference type="FunFam" id="3.40.5.10:FF:000003">
    <property type="entry name" value="50S ribosomal protein L9"/>
    <property type="match status" value="1"/>
</dbReference>
<dbReference type="Gene3D" id="3.10.430.100">
    <property type="entry name" value="Ribosomal protein L9, C-terminal domain"/>
    <property type="match status" value="1"/>
</dbReference>
<dbReference type="Gene3D" id="3.40.5.10">
    <property type="entry name" value="Ribosomal protein L9, N-terminal domain"/>
    <property type="match status" value="1"/>
</dbReference>
<dbReference type="HAMAP" id="MF_00503">
    <property type="entry name" value="Ribosomal_bL9"/>
    <property type="match status" value="1"/>
</dbReference>
<dbReference type="InterPro" id="IPR000244">
    <property type="entry name" value="Ribosomal_bL9"/>
</dbReference>
<dbReference type="InterPro" id="IPR009027">
    <property type="entry name" value="Ribosomal_bL9/RNase_H1_N"/>
</dbReference>
<dbReference type="InterPro" id="IPR020594">
    <property type="entry name" value="Ribosomal_bL9_bac/chp"/>
</dbReference>
<dbReference type="InterPro" id="IPR020069">
    <property type="entry name" value="Ribosomal_bL9_C"/>
</dbReference>
<dbReference type="InterPro" id="IPR036791">
    <property type="entry name" value="Ribosomal_bL9_C_sf"/>
</dbReference>
<dbReference type="InterPro" id="IPR020070">
    <property type="entry name" value="Ribosomal_bL9_N"/>
</dbReference>
<dbReference type="InterPro" id="IPR036935">
    <property type="entry name" value="Ribosomal_bL9_N_sf"/>
</dbReference>
<dbReference type="NCBIfam" id="TIGR00158">
    <property type="entry name" value="L9"/>
    <property type="match status" value="1"/>
</dbReference>
<dbReference type="PANTHER" id="PTHR21368">
    <property type="entry name" value="50S RIBOSOMAL PROTEIN L9"/>
    <property type="match status" value="1"/>
</dbReference>
<dbReference type="Pfam" id="PF03948">
    <property type="entry name" value="Ribosomal_L9_C"/>
    <property type="match status" value="1"/>
</dbReference>
<dbReference type="Pfam" id="PF01281">
    <property type="entry name" value="Ribosomal_L9_N"/>
    <property type="match status" value="1"/>
</dbReference>
<dbReference type="SUPFAM" id="SSF55658">
    <property type="entry name" value="L9 N-domain-like"/>
    <property type="match status" value="1"/>
</dbReference>
<dbReference type="SUPFAM" id="SSF55653">
    <property type="entry name" value="Ribosomal protein L9 C-domain"/>
    <property type="match status" value="1"/>
</dbReference>
<dbReference type="PROSITE" id="PS00651">
    <property type="entry name" value="RIBOSOMAL_L9"/>
    <property type="match status" value="1"/>
</dbReference>
<comment type="function">
    <text evidence="1">Binds to the 23S rRNA.</text>
</comment>
<comment type="similarity">
    <text evidence="1">Belongs to the bacterial ribosomal protein bL9 family.</text>
</comment>
<organism>
    <name type="scientific">Mycobacterium sp. (strain KMS)</name>
    <dbReference type="NCBI Taxonomy" id="189918"/>
    <lineage>
        <taxon>Bacteria</taxon>
        <taxon>Bacillati</taxon>
        <taxon>Actinomycetota</taxon>
        <taxon>Actinomycetes</taxon>
        <taxon>Mycobacteriales</taxon>
        <taxon>Mycobacteriaceae</taxon>
        <taxon>Mycobacterium</taxon>
    </lineage>
</organism>
<name>RL9_MYCSK</name>